<comment type="function">
    <text evidence="1">Catalyzes the phosphorylation of the hydroxyl group of 4-methyl-5-beta-hydroxyethylthiazole (THZ).</text>
</comment>
<comment type="catalytic activity">
    <reaction evidence="1">
        <text>5-(2-hydroxyethyl)-4-methylthiazole + ATP = 4-methyl-5-(2-phosphooxyethyl)-thiazole + ADP + H(+)</text>
        <dbReference type="Rhea" id="RHEA:24212"/>
        <dbReference type="ChEBI" id="CHEBI:15378"/>
        <dbReference type="ChEBI" id="CHEBI:17957"/>
        <dbReference type="ChEBI" id="CHEBI:30616"/>
        <dbReference type="ChEBI" id="CHEBI:58296"/>
        <dbReference type="ChEBI" id="CHEBI:456216"/>
        <dbReference type="EC" id="2.7.1.50"/>
    </reaction>
</comment>
<comment type="cofactor">
    <cofactor evidence="1">
        <name>Mg(2+)</name>
        <dbReference type="ChEBI" id="CHEBI:18420"/>
    </cofactor>
</comment>
<comment type="pathway">
    <text evidence="1">Cofactor biosynthesis; thiamine diphosphate biosynthesis; 4-methyl-5-(2-phosphoethyl)-thiazole from 5-(2-hydroxyethyl)-4-methylthiazole: step 1/1.</text>
</comment>
<comment type="similarity">
    <text evidence="1">Belongs to the Thz kinase family.</text>
</comment>
<accession>A7FVR9</accession>
<organism>
    <name type="scientific">Clostridium botulinum (strain ATCC 19397 / Type A)</name>
    <dbReference type="NCBI Taxonomy" id="441770"/>
    <lineage>
        <taxon>Bacteria</taxon>
        <taxon>Bacillati</taxon>
        <taxon>Bacillota</taxon>
        <taxon>Clostridia</taxon>
        <taxon>Eubacteriales</taxon>
        <taxon>Clostridiaceae</taxon>
        <taxon>Clostridium</taxon>
    </lineage>
</organism>
<keyword id="KW-0067">ATP-binding</keyword>
<keyword id="KW-0418">Kinase</keyword>
<keyword id="KW-0460">Magnesium</keyword>
<keyword id="KW-0479">Metal-binding</keyword>
<keyword id="KW-0547">Nucleotide-binding</keyword>
<keyword id="KW-0784">Thiamine biosynthesis</keyword>
<keyword id="KW-0808">Transferase</keyword>
<gene>
    <name evidence="1" type="primary">thiM2</name>
    <name type="ordered locus">CLB_2193</name>
</gene>
<proteinExistence type="inferred from homology"/>
<evidence type="ECO:0000255" key="1">
    <source>
        <dbReference type="HAMAP-Rule" id="MF_00228"/>
    </source>
</evidence>
<dbReference type="EC" id="2.7.1.50" evidence="1"/>
<dbReference type="EMBL" id="CP000726">
    <property type="protein sequence ID" value="ABS34423.1"/>
    <property type="molecule type" value="Genomic_DNA"/>
</dbReference>
<dbReference type="SMR" id="A7FVR9"/>
<dbReference type="KEGG" id="cba:CLB_2193"/>
<dbReference type="HOGENOM" id="CLU_019943_0_0_9"/>
<dbReference type="UniPathway" id="UPA00060">
    <property type="reaction ID" value="UER00139"/>
</dbReference>
<dbReference type="GO" id="GO:0005524">
    <property type="term" value="F:ATP binding"/>
    <property type="evidence" value="ECO:0007669"/>
    <property type="project" value="UniProtKB-UniRule"/>
</dbReference>
<dbReference type="GO" id="GO:0004417">
    <property type="term" value="F:hydroxyethylthiazole kinase activity"/>
    <property type="evidence" value="ECO:0007669"/>
    <property type="project" value="UniProtKB-UniRule"/>
</dbReference>
<dbReference type="GO" id="GO:0000287">
    <property type="term" value="F:magnesium ion binding"/>
    <property type="evidence" value="ECO:0007669"/>
    <property type="project" value="UniProtKB-UniRule"/>
</dbReference>
<dbReference type="GO" id="GO:0009228">
    <property type="term" value="P:thiamine biosynthetic process"/>
    <property type="evidence" value="ECO:0007669"/>
    <property type="project" value="UniProtKB-KW"/>
</dbReference>
<dbReference type="GO" id="GO:0009229">
    <property type="term" value="P:thiamine diphosphate biosynthetic process"/>
    <property type="evidence" value="ECO:0007669"/>
    <property type="project" value="UniProtKB-UniRule"/>
</dbReference>
<dbReference type="CDD" id="cd01170">
    <property type="entry name" value="THZ_kinase"/>
    <property type="match status" value="1"/>
</dbReference>
<dbReference type="Gene3D" id="3.40.1190.20">
    <property type="match status" value="1"/>
</dbReference>
<dbReference type="HAMAP" id="MF_00228">
    <property type="entry name" value="Thz_kinase"/>
    <property type="match status" value="1"/>
</dbReference>
<dbReference type="InterPro" id="IPR000417">
    <property type="entry name" value="Hyethyz_kinase"/>
</dbReference>
<dbReference type="InterPro" id="IPR029056">
    <property type="entry name" value="Ribokinase-like"/>
</dbReference>
<dbReference type="NCBIfam" id="NF006830">
    <property type="entry name" value="PRK09355.1"/>
    <property type="match status" value="1"/>
</dbReference>
<dbReference type="Pfam" id="PF02110">
    <property type="entry name" value="HK"/>
    <property type="match status" value="1"/>
</dbReference>
<dbReference type="PIRSF" id="PIRSF000513">
    <property type="entry name" value="Thz_kinase"/>
    <property type="match status" value="1"/>
</dbReference>
<dbReference type="PRINTS" id="PR01099">
    <property type="entry name" value="HYETHTZKNASE"/>
</dbReference>
<dbReference type="SUPFAM" id="SSF53613">
    <property type="entry name" value="Ribokinase-like"/>
    <property type="match status" value="1"/>
</dbReference>
<feature type="chain" id="PRO_0000383838" description="Hydroxyethylthiazole kinase 2">
    <location>
        <begin position="1"/>
        <end position="265"/>
    </location>
</feature>
<feature type="binding site" evidence="1">
    <location>
        <position position="39"/>
    </location>
    <ligand>
        <name>substrate</name>
    </ligand>
</feature>
<feature type="binding site" evidence="1">
    <location>
        <position position="115"/>
    </location>
    <ligand>
        <name>ATP</name>
        <dbReference type="ChEBI" id="CHEBI:30616"/>
    </ligand>
</feature>
<feature type="binding site" evidence="1">
    <location>
        <position position="168"/>
    </location>
    <ligand>
        <name>ATP</name>
        <dbReference type="ChEBI" id="CHEBI:30616"/>
    </ligand>
</feature>
<feature type="binding site" evidence="1">
    <location>
        <position position="195"/>
    </location>
    <ligand>
        <name>substrate</name>
    </ligand>
</feature>
<sequence>MQIRQSIKLKKPLIHYITNPISINDCANIILAAGAKPIMAEHPLEVSEITSVSKSLGVNLGNITDNKMKSMLISGKTAYENKIPQVIDLVGVGCSKLRLDYAKKFISECHPNVIKGNMSEIKAIYGIKSSAKGIDVGACDIITKQNFDENIEMIKRLSMETGSVVAATGVVDIISNGTYTYIISNGCEMLSMITGTGCMLTGLIASYISSENILDGTVLAVALMGICGELSQHAKGTGSFRNELTDNMFSISDDIIIKKIRINSY</sequence>
<protein>
    <recommendedName>
        <fullName evidence="1">Hydroxyethylthiazole kinase 2</fullName>
        <ecNumber evidence="1">2.7.1.50</ecNumber>
    </recommendedName>
    <alternativeName>
        <fullName evidence="1">4-methyl-5-beta-hydroxyethylthiazole kinase 2</fullName>
        <shortName evidence="1">TH kinase 2</shortName>
        <shortName evidence="1">Thz kinase 2</shortName>
    </alternativeName>
</protein>
<reference key="1">
    <citation type="journal article" date="2007" name="PLoS ONE">
        <title>Analysis of the neurotoxin complex genes in Clostridium botulinum A1-A4 and B1 strains: BoNT/A3, /Ba4 and /B1 clusters are located within plasmids.</title>
        <authorList>
            <person name="Smith T.J."/>
            <person name="Hill K.K."/>
            <person name="Foley B.T."/>
            <person name="Detter J.C."/>
            <person name="Munk A.C."/>
            <person name="Bruce D.C."/>
            <person name="Doggett N.A."/>
            <person name="Smith L.A."/>
            <person name="Marks J.D."/>
            <person name="Xie G."/>
            <person name="Brettin T.S."/>
        </authorList>
    </citation>
    <scope>NUCLEOTIDE SEQUENCE [LARGE SCALE GENOMIC DNA]</scope>
    <source>
        <strain>ATCC 19397 / Type A</strain>
    </source>
</reference>
<name>THIM2_CLOB1</name>